<sequence length="357" mass="38732">MSDSKNLNQERQKALDSAISQIEKAFGRGAIMKLKQGAIEKIDSISTGSIALDTALGIGGFPKGRIVEIFGPESSGKTTLALHVIAESQKKGGNCAFIDAEHALDIMYARKLGVNTGDLIVSQPDTGEQALHIVEYLVCSGAIDVIVVDSVAALTPRAEIEGDMGDQHMGLQARLLSHALRKLTSIVSKANCVLIFINQIRMKIGVVYGNPETTTGGNALKFYSSVRLDIRKVSAIKDKDVIIGNQTKVKVVKNKVAPPFKQVDFDIMYNEGISKVGEIIDMGVKLNIIEKAGSYYSYNSVRLGQGKENAKSYLKANCDTAHEIEQKIRSILASDNEVSCFNAEVNDNLHEVEETVF</sequence>
<gene>
    <name evidence="1" type="primary">recA</name>
    <name type="ordered locus">ECH_1109</name>
</gene>
<feature type="chain" id="PRO_1000047916" description="Protein RecA">
    <location>
        <begin position="1"/>
        <end position="357"/>
    </location>
</feature>
<feature type="binding site" evidence="1">
    <location>
        <begin position="71"/>
        <end position="78"/>
    </location>
    <ligand>
        <name>ATP</name>
        <dbReference type="ChEBI" id="CHEBI:30616"/>
    </ligand>
</feature>
<proteinExistence type="inferred from homology"/>
<name>RECA_EHRCR</name>
<evidence type="ECO:0000255" key="1">
    <source>
        <dbReference type="HAMAP-Rule" id="MF_00268"/>
    </source>
</evidence>
<reference key="1">
    <citation type="journal article" date="2006" name="PLoS Genet.">
        <title>Comparative genomics of emerging human ehrlichiosis agents.</title>
        <authorList>
            <person name="Dunning Hotopp J.C."/>
            <person name="Lin M."/>
            <person name="Madupu R."/>
            <person name="Crabtree J."/>
            <person name="Angiuoli S.V."/>
            <person name="Eisen J.A."/>
            <person name="Seshadri R."/>
            <person name="Ren Q."/>
            <person name="Wu M."/>
            <person name="Utterback T.R."/>
            <person name="Smith S."/>
            <person name="Lewis M."/>
            <person name="Khouri H."/>
            <person name="Zhang C."/>
            <person name="Niu H."/>
            <person name="Lin Q."/>
            <person name="Ohashi N."/>
            <person name="Zhi N."/>
            <person name="Nelson W.C."/>
            <person name="Brinkac L.M."/>
            <person name="Dodson R.J."/>
            <person name="Rosovitz M.J."/>
            <person name="Sundaram J.P."/>
            <person name="Daugherty S.C."/>
            <person name="Davidsen T."/>
            <person name="Durkin A.S."/>
            <person name="Gwinn M.L."/>
            <person name="Haft D.H."/>
            <person name="Selengut J.D."/>
            <person name="Sullivan S.A."/>
            <person name="Zafar N."/>
            <person name="Zhou L."/>
            <person name="Benahmed F."/>
            <person name="Forberger H."/>
            <person name="Halpin R."/>
            <person name="Mulligan S."/>
            <person name="Robinson J."/>
            <person name="White O."/>
            <person name="Rikihisa Y."/>
            <person name="Tettelin H."/>
        </authorList>
    </citation>
    <scope>NUCLEOTIDE SEQUENCE [LARGE SCALE GENOMIC DNA]</scope>
    <source>
        <strain>ATCC CRL-10679 / Arkansas</strain>
    </source>
</reference>
<comment type="function">
    <text evidence="1">Can catalyze the hydrolysis of ATP in the presence of single-stranded DNA, the ATP-dependent uptake of single-stranded DNA by duplex DNA, and the ATP-dependent hybridization of homologous single-stranded DNAs. It interacts with LexA causing its activation and leading to its autocatalytic cleavage.</text>
</comment>
<comment type="subcellular location">
    <subcellularLocation>
        <location evidence="1">Cytoplasm</location>
    </subcellularLocation>
</comment>
<comment type="similarity">
    <text evidence="1">Belongs to the RecA family.</text>
</comment>
<accession>Q2GF90</accession>
<keyword id="KW-0067">ATP-binding</keyword>
<keyword id="KW-0963">Cytoplasm</keyword>
<keyword id="KW-0227">DNA damage</keyword>
<keyword id="KW-0233">DNA recombination</keyword>
<keyword id="KW-0234">DNA repair</keyword>
<keyword id="KW-0238">DNA-binding</keyword>
<keyword id="KW-0547">Nucleotide-binding</keyword>
<keyword id="KW-1185">Reference proteome</keyword>
<keyword id="KW-0742">SOS response</keyword>
<dbReference type="EMBL" id="CP000236">
    <property type="protein sequence ID" value="ABD45043.1"/>
    <property type="molecule type" value="Genomic_DNA"/>
</dbReference>
<dbReference type="RefSeq" id="WP_006011556.1">
    <property type="nucleotide sequence ID" value="NC_007799.1"/>
</dbReference>
<dbReference type="SMR" id="Q2GF90"/>
<dbReference type="STRING" id="205920.ECH_1109"/>
<dbReference type="KEGG" id="ech:ECH_1109"/>
<dbReference type="eggNOG" id="COG0468">
    <property type="taxonomic scope" value="Bacteria"/>
</dbReference>
<dbReference type="HOGENOM" id="CLU_040469_3_2_5"/>
<dbReference type="OrthoDB" id="9776733at2"/>
<dbReference type="Proteomes" id="UP000008320">
    <property type="component" value="Chromosome"/>
</dbReference>
<dbReference type="GO" id="GO:0005829">
    <property type="term" value="C:cytosol"/>
    <property type="evidence" value="ECO:0007669"/>
    <property type="project" value="TreeGrafter"/>
</dbReference>
<dbReference type="GO" id="GO:0005524">
    <property type="term" value="F:ATP binding"/>
    <property type="evidence" value="ECO:0007669"/>
    <property type="project" value="UniProtKB-UniRule"/>
</dbReference>
<dbReference type="GO" id="GO:0016887">
    <property type="term" value="F:ATP hydrolysis activity"/>
    <property type="evidence" value="ECO:0007669"/>
    <property type="project" value="InterPro"/>
</dbReference>
<dbReference type="GO" id="GO:0140664">
    <property type="term" value="F:ATP-dependent DNA damage sensor activity"/>
    <property type="evidence" value="ECO:0007669"/>
    <property type="project" value="InterPro"/>
</dbReference>
<dbReference type="GO" id="GO:0003684">
    <property type="term" value="F:damaged DNA binding"/>
    <property type="evidence" value="ECO:0007669"/>
    <property type="project" value="UniProtKB-UniRule"/>
</dbReference>
<dbReference type="GO" id="GO:0003697">
    <property type="term" value="F:single-stranded DNA binding"/>
    <property type="evidence" value="ECO:0007669"/>
    <property type="project" value="UniProtKB-UniRule"/>
</dbReference>
<dbReference type="GO" id="GO:0006310">
    <property type="term" value="P:DNA recombination"/>
    <property type="evidence" value="ECO:0007669"/>
    <property type="project" value="UniProtKB-UniRule"/>
</dbReference>
<dbReference type="GO" id="GO:0006281">
    <property type="term" value="P:DNA repair"/>
    <property type="evidence" value="ECO:0007669"/>
    <property type="project" value="UniProtKB-UniRule"/>
</dbReference>
<dbReference type="GO" id="GO:0009432">
    <property type="term" value="P:SOS response"/>
    <property type="evidence" value="ECO:0007669"/>
    <property type="project" value="UniProtKB-UniRule"/>
</dbReference>
<dbReference type="CDD" id="cd00983">
    <property type="entry name" value="RecA"/>
    <property type="match status" value="1"/>
</dbReference>
<dbReference type="FunFam" id="3.40.50.300:FF:000087">
    <property type="entry name" value="Recombinase RecA"/>
    <property type="match status" value="1"/>
</dbReference>
<dbReference type="Gene3D" id="3.40.50.300">
    <property type="entry name" value="P-loop containing nucleotide triphosphate hydrolases"/>
    <property type="match status" value="1"/>
</dbReference>
<dbReference type="HAMAP" id="MF_00268">
    <property type="entry name" value="RecA"/>
    <property type="match status" value="1"/>
</dbReference>
<dbReference type="InterPro" id="IPR003593">
    <property type="entry name" value="AAA+_ATPase"/>
</dbReference>
<dbReference type="InterPro" id="IPR013765">
    <property type="entry name" value="DNA_recomb/repair_RecA"/>
</dbReference>
<dbReference type="InterPro" id="IPR020584">
    <property type="entry name" value="DNA_recomb/repair_RecA_CS"/>
</dbReference>
<dbReference type="InterPro" id="IPR027417">
    <property type="entry name" value="P-loop_NTPase"/>
</dbReference>
<dbReference type="InterPro" id="IPR049261">
    <property type="entry name" value="RecA-like_C"/>
</dbReference>
<dbReference type="InterPro" id="IPR049428">
    <property type="entry name" value="RecA-like_N"/>
</dbReference>
<dbReference type="InterPro" id="IPR020588">
    <property type="entry name" value="RecA_ATP-bd"/>
</dbReference>
<dbReference type="InterPro" id="IPR023400">
    <property type="entry name" value="RecA_C_sf"/>
</dbReference>
<dbReference type="InterPro" id="IPR020587">
    <property type="entry name" value="RecA_monomer-monomer_interface"/>
</dbReference>
<dbReference type="NCBIfam" id="TIGR02012">
    <property type="entry name" value="tigrfam_recA"/>
    <property type="match status" value="1"/>
</dbReference>
<dbReference type="PANTHER" id="PTHR45900:SF1">
    <property type="entry name" value="MITOCHONDRIAL DNA REPAIR PROTEIN RECA HOMOLOG-RELATED"/>
    <property type="match status" value="1"/>
</dbReference>
<dbReference type="PANTHER" id="PTHR45900">
    <property type="entry name" value="RECA"/>
    <property type="match status" value="1"/>
</dbReference>
<dbReference type="Pfam" id="PF00154">
    <property type="entry name" value="RecA"/>
    <property type="match status" value="1"/>
</dbReference>
<dbReference type="Pfam" id="PF21096">
    <property type="entry name" value="RecA_C"/>
    <property type="match status" value="1"/>
</dbReference>
<dbReference type="PRINTS" id="PR00142">
    <property type="entry name" value="RECA"/>
</dbReference>
<dbReference type="SMART" id="SM00382">
    <property type="entry name" value="AAA"/>
    <property type="match status" value="1"/>
</dbReference>
<dbReference type="SUPFAM" id="SSF52540">
    <property type="entry name" value="P-loop containing nucleoside triphosphate hydrolases"/>
    <property type="match status" value="1"/>
</dbReference>
<dbReference type="SUPFAM" id="SSF54752">
    <property type="entry name" value="RecA protein, C-terminal domain"/>
    <property type="match status" value="1"/>
</dbReference>
<dbReference type="PROSITE" id="PS00321">
    <property type="entry name" value="RECA_1"/>
    <property type="match status" value="1"/>
</dbReference>
<dbReference type="PROSITE" id="PS50162">
    <property type="entry name" value="RECA_2"/>
    <property type="match status" value="1"/>
</dbReference>
<dbReference type="PROSITE" id="PS50163">
    <property type="entry name" value="RECA_3"/>
    <property type="match status" value="1"/>
</dbReference>
<organism>
    <name type="scientific">Ehrlichia chaffeensis (strain ATCC CRL-10679 / Arkansas)</name>
    <dbReference type="NCBI Taxonomy" id="205920"/>
    <lineage>
        <taxon>Bacteria</taxon>
        <taxon>Pseudomonadati</taxon>
        <taxon>Pseudomonadota</taxon>
        <taxon>Alphaproteobacteria</taxon>
        <taxon>Rickettsiales</taxon>
        <taxon>Anaplasmataceae</taxon>
        <taxon>Ehrlichia</taxon>
    </lineage>
</organism>
<protein>
    <recommendedName>
        <fullName evidence="1">Protein RecA</fullName>
    </recommendedName>
    <alternativeName>
        <fullName evidence="1">Recombinase A</fullName>
    </alternativeName>
</protein>